<keyword id="KW-0687">Ribonucleoprotein</keyword>
<keyword id="KW-0689">Ribosomal protein</keyword>
<keyword id="KW-0694">RNA-binding</keyword>
<keyword id="KW-0699">rRNA-binding</keyword>
<sequence length="97" mass="11163">MANNKSAKKRIQIAERNRLNNKSYKSTVRTLTKKTLENCEKYKKEPNEDNMNLVKTSLNKAFSLIDKAVKKNVLHKNNGANKKSKINKFVKTALNIK</sequence>
<reference key="1">
    <citation type="journal article" date="2007" name="PLoS Genet.">
        <title>Patterns and implications of gene gain and loss in the evolution of Prochlorococcus.</title>
        <authorList>
            <person name="Kettler G.C."/>
            <person name="Martiny A.C."/>
            <person name="Huang K."/>
            <person name="Zucker J."/>
            <person name="Coleman M.L."/>
            <person name="Rodrigue S."/>
            <person name="Chen F."/>
            <person name="Lapidus A."/>
            <person name="Ferriera S."/>
            <person name="Johnson J."/>
            <person name="Steglich C."/>
            <person name="Church G.M."/>
            <person name="Richardson P."/>
            <person name="Chisholm S.W."/>
        </authorList>
    </citation>
    <scope>NUCLEOTIDE SEQUENCE [LARGE SCALE GENOMIC DNA]</scope>
    <source>
        <strain>MIT 9215</strain>
    </source>
</reference>
<feature type="chain" id="PRO_1000060493" description="Small ribosomal subunit protein bS20">
    <location>
        <begin position="1"/>
        <end position="97"/>
    </location>
</feature>
<evidence type="ECO:0000255" key="1">
    <source>
        <dbReference type="HAMAP-Rule" id="MF_00500"/>
    </source>
</evidence>
<evidence type="ECO:0000305" key="2"/>
<name>RS20_PROM2</name>
<protein>
    <recommendedName>
        <fullName evidence="1">Small ribosomal subunit protein bS20</fullName>
    </recommendedName>
    <alternativeName>
        <fullName evidence="2">30S ribosomal protein S20</fullName>
    </alternativeName>
</protein>
<gene>
    <name evidence="1" type="primary">rpsT</name>
    <name evidence="1" type="synonym">rps20</name>
    <name type="ordered locus">P9215_17561</name>
</gene>
<accession>A8G6Y8</accession>
<dbReference type="EMBL" id="CP000825">
    <property type="protein sequence ID" value="ABV51369.1"/>
    <property type="molecule type" value="Genomic_DNA"/>
</dbReference>
<dbReference type="RefSeq" id="WP_012008386.1">
    <property type="nucleotide sequence ID" value="NC_009840.1"/>
</dbReference>
<dbReference type="SMR" id="A8G6Y8"/>
<dbReference type="STRING" id="93060.P9215_17561"/>
<dbReference type="KEGG" id="pmh:P9215_17561"/>
<dbReference type="eggNOG" id="COG0268">
    <property type="taxonomic scope" value="Bacteria"/>
</dbReference>
<dbReference type="HOGENOM" id="CLU_160655_5_0_3"/>
<dbReference type="OrthoDB" id="9808392at2"/>
<dbReference type="Proteomes" id="UP000002014">
    <property type="component" value="Chromosome"/>
</dbReference>
<dbReference type="GO" id="GO:0005829">
    <property type="term" value="C:cytosol"/>
    <property type="evidence" value="ECO:0007669"/>
    <property type="project" value="TreeGrafter"/>
</dbReference>
<dbReference type="GO" id="GO:0015935">
    <property type="term" value="C:small ribosomal subunit"/>
    <property type="evidence" value="ECO:0007669"/>
    <property type="project" value="TreeGrafter"/>
</dbReference>
<dbReference type="GO" id="GO:0070181">
    <property type="term" value="F:small ribosomal subunit rRNA binding"/>
    <property type="evidence" value="ECO:0007669"/>
    <property type="project" value="TreeGrafter"/>
</dbReference>
<dbReference type="GO" id="GO:0003735">
    <property type="term" value="F:structural constituent of ribosome"/>
    <property type="evidence" value="ECO:0007669"/>
    <property type="project" value="InterPro"/>
</dbReference>
<dbReference type="GO" id="GO:0006412">
    <property type="term" value="P:translation"/>
    <property type="evidence" value="ECO:0007669"/>
    <property type="project" value="UniProtKB-UniRule"/>
</dbReference>
<dbReference type="Gene3D" id="1.20.58.110">
    <property type="entry name" value="Ribosomal protein S20"/>
    <property type="match status" value="1"/>
</dbReference>
<dbReference type="HAMAP" id="MF_00500">
    <property type="entry name" value="Ribosomal_bS20"/>
    <property type="match status" value="1"/>
</dbReference>
<dbReference type="InterPro" id="IPR002583">
    <property type="entry name" value="Ribosomal_bS20"/>
</dbReference>
<dbReference type="InterPro" id="IPR036510">
    <property type="entry name" value="Ribosomal_bS20_sf"/>
</dbReference>
<dbReference type="NCBIfam" id="TIGR00029">
    <property type="entry name" value="S20"/>
    <property type="match status" value="1"/>
</dbReference>
<dbReference type="PANTHER" id="PTHR33398">
    <property type="entry name" value="30S RIBOSOMAL PROTEIN S20"/>
    <property type="match status" value="1"/>
</dbReference>
<dbReference type="PANTHER" id="PTHR33398:SF1">
    <property type="entry name" value="SMALL RIBOSOMAL SUBUNIT PROTEIN BS20C"/>
    <property type="match status" value="1"/>
</dbReference>
<dbReference type="Pfam" id="PF01649">
    <property type="entry name" value="Ribosomal_S20p"/>
    <property type="match status" value="1"/>
</dbReference>
<dbReference type="SUPFAM" id="SSF46992">
    <property type="entry name" value="Ribosomal protein S20"/>
    <property type="match status" value="1"/>
</dbReference>
<comment type="function">
    <text evidence="1">Binds directly to 16S ribosomal RNA.</text>
</comment>
<comment type="similarity">
    <text evidence="1">Belongs to the bacterial ribosomal protein bS20 family.</text>
</comment>
<organism>
    <name type="scientific">Prochlorococcus marinus (strain MIT 9215)</name>
    <dbReference type="NCBI Taxonomy" id="93060"/>
    <lineage>
        <taxon>Bacteria</taxon>
        <taxon>Bacillati</taxon>
        <taxon>Cyanobacteriota</taxon>
        <taxon>Cyanophyceae</taxon>
        <taxon>Synechococcales</taxon>
        <taxon>Prochlorococcaceae</taxon>
        <taxon>Prochlorococcus</taxon>
    </lineage>
</organism>
<proteinExistence type="inferred from homology"/>